<gene>
    <name type="primary">Htr7</name>
</gene>
<sequence>MMDVNSSGRPDLYGHLRSLILPEVGRRLQDLSPDGGAHSVVSSWMPHLLSGFPEVTASPAPTWDAPPDNVSGCGEQINYGRVEKVVIGSILTLITLLTIAGNCLVVISVCFVKKLRQPSNYLIVSLALADLSVAVAVMPFVSVTDLIGGKWIFGHFFCNVFIAMDVMCCTASIMTLCVISIDRYLGITRPLTYPVRQNGKCMAKMILSVWLLSASITLPPLFGWAQNVNDDKVCLISQDFGYTIYSTAVAFYIPMSVMLFMYYQIYKAARKSAAKHKFSGFPRVQPESVISLNGVVKLQKEVEECANLSRLLKHERKNISIFKREQKAATTLGIIVGAFTVCWLPFFLLSTARPFICGTSCSCIPLWVERTCLWLGYANSLINPFIYAFFNRDLRTTYRSLLQCQYRNINRKLSAAGMHEALKLAERPERSEFVLQNCDHCGKKGHDT</sequence>
<name>5HT7R_MOUSE</name>
<reference key="1">
    <citation type="journal article" date="1993" name="Mol. Pharmacol.">
        <title>Molecular cloning of a mammalian serotonin receptor that activates adenylate cyclase.</title>
        <authorList>
            <person name="Plassat J.-L."/>
            <person name="Amlaiky N."/>
            <person name="Hen R."/>
        </authorList>
    </citation>
    <scope>NUCLEOTIDE SEQUENCE [MRNA]</scope>
    <scope>FUNCTION</scope>
</reference>
<reference key="2">
    <citation type="submission" date="2005-07" db="EMBL/GenBank/DDBJ databases">
        <authorList>
            <person name="Mural R.J."/>
            <person name="Adams M.D."/>
            <person name="Myers E.W."/>
            <person name="Smith H.O."/>
            <person name="Venter J.C."/>
        </authorList>
    </citation>
    <scope>NUCLEOTIDE SEQUENCE [LARGE SCALE GENOMIC DNA]</scope>
</reference>
<reference key="3">
    <citation type="journal article" date="2004" name="Genome Res.">
        <title>The status, quality, and expansion of the NIH full-length cDNA project: the Mammalian Gene Collection (MGC).</title>
        <authorList>
            <consortium name="The MGC Project Team"/>
        </authorList>
    </citation>
    <scope>NUCLEOTIDE SEQUENCE [LARGE SCALE MRNA]</scope>
    <source>
        <tissue>Brain</tissue>
    </source>
</reference>
<evidence type="ECO:0000250" key="1">
    <source>
        <dbReference type="UniProtKB" id="P34969"/>
    </source>
</evidence>
<evidence type="ECO:0000250" key="2">
    <source>
        <dbReference type="UniProtKB" id="Q13639"/>
    </source>
</evidence>
<evidence type="ECO:0000255" key="3"/>
<evidence type="ECO:0000255" key="4">
    <source>
        <dbReference type="PROSITE-ProRule" id="PRU00521"/>
    </source>
</evidence>
<evidence type="ECO:0000269" key="5">
    <source>
    </source>
</evidence>
<evidence type="ECO:0000303" key="6">
    <source>
    </source>
</evidence>
<evidence type="ECO:0000305" key="7"/>
<keyword id="KW-1003">Cell membrane</keyword>
<keyword id="KW-1015">Disulfide bond</keyword>
<keyword id="KW-0297">G-protein coupled receptor</keyword>
<keyword id="KW-0325">Glycoprotein</keyword>
<keyword id="KW-0449">Lipoprotein</keyword>
<keyword id="KW-0472">Membrane</keyword>
<keyword id="KW-0564">Palmitate</keyword>
<keyword id="KW-0675">Receptor</keyword>
<keyword id="KW-1185">Reference proteome</keyword>
<keyword id="KW-0807">Transducer</keyword>
<keyword id="KW-0812">Transmembrane</keyword>
<keyword id="KW-1133">Transmembrane helix</keyword>
<feature type="chain" id="PRO_0000068980" description="5-hydroxytryptamine receptor 7">
    <location>
        <begin position="1"/>
        <end position="448"/>
    </location>
</feature>
<feature type="topological domain" description="Extracellular" evidence="1">
    <location>
        <begin position="1"/>
        <end position="86"/>
    </location>
</feature>
<feature type="transmembrane region" description="Helical; Name=1" evidence="1">
    <location>
        <begin position="87"/>
        <end position="111"/>
    </location>
</feature>
<feature type="topological domain" description="Cytoplasmic" evidence="1">
    <location>
        <begin position="112"/>
        <end position="121"/>
    </location>
</feature>
<feature type="transmembrane region" description="Helical; Name=2" evidence="1">
    <location>
        <begin position="122"/>
        <end position="143"/>
    </location>
</feature>
<feature type="topological domain" description="Extracellular" evidence="1">
    <location>
        <begin position="144"/>
        <end position="155"/>
    </location>
</feature>
<feature type="transmembrane region" description="Helical; Name=3" evidence="1">
    <location>
        <begin position="156"/>
        <end position="181"/>
    </location>
</feature>
<feature type="topological domain" description="Cytoplasmic" evidence="1">
    <location>
        <begin position="182"/>
        <end position="201"/>
    </location>
</feature>
<feature type="transmembrane region" description="Helical; Name=4" evidence="1">
    <location>
        <begin position="202"/>
        <end position="222"/>
    </location>
</feature>
<feature type="topological domain" description="Extracellular" evidence="1">
    <location>
        <begin position="223"/>
        <end position="240"/>
    </location>
</feature>
<feature type="transmembrane region" description="Helical; Name=5" evidence="1">
    <location>
        <begin position="241"/>
        <end position="263"/>
    </location>
</feature>
<feature type="topological domain" description="Cytoplasmic" evidence="1">
    <location>
        <begin position="264"/>
        <end position="329"/>
    </location>
</feature>
<feature type="transmembrane region" description="Helical; Name=6" evidence="1">
    <location>
        <begin position="330"/>
        <end position="355"/>
    </location>
</feature>
<feature type="topological domain" description="Extracellular" evidence="1">
    <location>
        <begin position="356"/>
        <end position="366"/>
    </location>
</feature>
<feature type="transmembrane region" description="Helical; Name=7" evidence="1">
    <location>
        <begin position="367"/>
        <end position="390"/>
    </location>
</feature>
<feature type="topological domain" description="Cytoplasmic" evidence="1">
    <location>
        <begin position="391"/>
        <end position="448"/>
    </location>
</feature>
<feature type="binding site" evidence="2">
    <location>
        <position position="165"/>
    </location>
    <ligand>
        <name>serotonin</name>
        <dbReference type="ChEBI" id="CHEBI:350546"/>
    </ligand>
</feature>
<feature type="lipid moiety-binding region" description="S-palmitoyl cysteine" evidence="3">
    <location>
        <position position="404"/>
    </location>
</feature>
<feature type="glycosylation site" description="N-linked (GlcNAc...) asparagine" evidence="3">
    <location>
        <position position="5"/>
    </location>
</feature>
<feature type="glycosylation site" description="N-linked (GlcNAc...) asparagine" evidence="3">
    <location>
        <position position="69"/>
    </location>
</feature>
<feature type="disulfide bond" evidence="4">
    <location>
        <begin position="158"/>
        <end position="234"/>
    </location>
</feature>
<feature type="sequence conflict" description="In Ref. 1; CAA80654." evidence="7" ref="1">
    <original>KL</original>
    <variation>NV</variation>
    <location>
        <begin position="114"/>
        <end position="115"/>
    </location>
</feature>
<feature type="sequence conflict" description="In Ref. 1; CAA80654." evidence="7" ref="1">
    <original>L</original>
    <variation>P</variation>
    <location>
        <position position="211"/>
    </location>
</feature>
<feature type="sequence conflict" description="In Ref. 1; CAA80654." evidence="7" ref="1">
    <original>I</original>
    <variation>S</variation>
    <location>
        <position position="321"/>
    </location>
</feature>
<feature type="sequence conflict" description="In Ref. 1; CAA80654." evidence="7" ref="1">
    <original>A</original>
    <variation>S</variation>
    <location>
        <position position="388"/>
    </location>
</feature>
<comment type="function">
    <text evidence="1 5">G-protein coupled receptor for 5-hydroxytryptamine (serotonin), a biogenic hormone that functions as a neurotransmitter, a hormone and a mitogen (PubMed:8394987). Ligand binding causes a conformation change that triggers signaling via guanine nucleotide-binding proteins (G proteins) and modulates the activity of downstream effectors (By similarity). HTR7 is coupled to G(s) G alpha proteins and mediates activation of adenylate cyclase activity (By similarity).</text>
</comment>
<comment type="subcellular location">
    <subcellularLocation>
        <location evidence="1">Cell membrane</location>
        <topology evidence="1">Multi-pass membrane protein</topology>
    </subcellularLocation>
</comment>
<comment type="domain">
    <text evidence="2">Specificity for G(s) G alpha proteins is determined by the length of transmembrane regions 5 and 6 (TM5 and TM6).</text>
</comment>
<comment type="similarity">
    <text evidence="4">Belongs to the G-protein coupled receptor 1 family.</text>
</comment>
<accession>P32304</accession>
<accession>Q14A50</accession>
<protein>
    <recommendedName>
        <fullName>5-hydroxytryptamine receptor 7</fullName>
        <shortName>5-HT-7</shortName>
        <shortName>5-HT7</shortName>
    </recommendedName>
    <alternativeName>
        <fullName evidence="6">5-HT-X</fullName>
    </alternativeName>
    <alternativeName>
        <fullName>Serotonin receptor 7</fullName>
    </alternativeName>
</protein>
<dbReference type="EMBL" id="Z23107">
    <property type="protein sequence ID" value="CAA80654.1"/>
    <property type="molecule type" value="mRNA"/>
</dbReference>
<dbReference type="EMBL" id="CH466534">
    <property type="protein sequence ID" value="EDL41763.1"/>
    <property type="molecule type" value="Genomic_DNA"/>
</dbReference>
<dbReference type="EMBL" id="BC116986">
    <property type="protein sequence ID" value="AAI16987.1"/>
    <property type="molecule type" value="mRNA"/>
</dbReference>
<dbReference type="CCDS" id="CCDS29769.1"/>
<dbReference type="PIR" id="I48779">
    <property type="entry name" value="S36402"/>
</dbReference>
<dbReference type="RefSeq" id="NP_032341.2">
    <property type="nucleotide sequence ID" value="NM_008315.3"/>
</dbReference>
<dbReference type="SMR" id="P32304"/>
<dbReference type="CORUM" id="P32304"/>
<dbReference type="FunCoup" id="P32304">
    <property type="interactions" value="843"/>
</dbReference>
<dbReference type="STRING" id="10090.ENSMUSP00000097105"/>
<dbReference type="BindingDB" id="P32304"/>
<dbReference type="ChEMBL" id="CHEMBL4764"/>
<dbReference type="DrugCentral" id="P32304"/>
<dbReference type="GuidetoPHARMACOLOGY" id="12"/>
<dbReference type="GlyCosmos" id="P32304">
    <property type="glycosylation" value="2 sites, No reported glycans"/>
</dbReference>
<dbReference type="GlyGen" id="P32304">
    <property type="glycosylation" value="2 sites"/>
</dbReference>
<dbReference type="iPTMnet" id="P32304"/>
<dbReference type="PhosphoSitePlus" id="P32304"/>
<dbReference type="SwissPalm" id="P32304"/>
<dbReference type="PaxDb" id="10090-ENSMUSP00000126847"/>
<dbReference type="ProteomicsDB" id="285691"/>
<dbReference type="Antibodypedia" id="16324">
    <property type="antibodies" value="431 antibodies from 35 providers"/>
</dbReference>
<dbReference type="DNASU" id="15566"/>
<dbReference type="Ensembl" id="ENSMUST00000164639.8">
    <property type="protein sequence ID" value="ENSMUSP00000126847.2"/>
    <property type="gene ID" value="ENSMUSG00000024798.16"/>
</dbReference>
<dbReference type="GeneID" id="15566"/>
<dbReference type="KEGG" id="mmu:15566"/>
<dbReference type="UCSC" id="uc008hhd.1">
    <property type="organism name" value="mouse"/>
</dbReference>
<dbReference type="AGR" id="MGI:99841"/>
<dbReference type="CTD" id="3363"/>
<dbReference type="MGI" id="MGI:99841">
    <property type="gene designation" value="Htr7"/>
</dbReference>
<dbReference type="VEuPathDB" id="HostDB:ENSMUSG00000024798"/>
<dbReference type="eggNOG" id="KOG3656">
    <property type="taxonomic scope" value="Eukaryota"/>
</dbReference>
<dbReference type="GeneTree" id="ENSGT01010000222287"/>
<dbReference type="InParanoid" id="P32304"/>
<dbReference type="OMA" id="KPLTYPM"/>
<dbReference type="OrthoDB" id="10063595at2759"/>
<dbReference type="PhylomeDB" id="P32304"/>
<dbReference type="TreeFam" id="TF331895"/>
<dbReference type="Reactome" id="R-MMU-390666">
    <property type="pathway name" value="Serotonin receptors"/>
</dbReference>
<dbReference type="Reactome" id="R-MMU-418555">
    <property type="pathway name" value="G alpha (s) signalling events"/>
</dbReference>
<dbReference type="Reactome" id="R-MMU-9706019">
    <property type="pathway name" value="RHOBTB3 ATPase cycle"/>
</dbReference>
<dbReference type="BioGRID-ORCS" id="15566">
    <property type="hits" value="3 hits in 77 CRISPR screens"/>
</dbReference>
<dbReference type="ChiTaRS" id="Htr7">
    <property type="organism name" value="mouse"/>
</dbReference>
<dbReference type="PRO" id="PR:P32304"/>
<dbReference type="Proteomes" id="UP000000589">
    <property type="component" value="Chromosome 19"/>
</dbReference>
<dbReference type="RNAct" id="P32304">
    <property type="molecule type" value="protein"/>
</dbReference>
<dbReference type="Bgee" id="ENSMUSG00000024798">
    <property type="expression patterns" value="Expressed in medial dorsal nucleus of thalamus and 127 other cell types or tissues"/>
</dbReference>
<dbReference type="ExpressionAtlas" id="P32304">
    <property type="expression patterns" value="baseline and differential"/>
</dbReference>
<dbReference type="GO" id="GO:0005886">
    <property type="term" value="C:plasma membrane"/>
    <property type="evidence" value="ECO:0000250"/>
    <property type="project" value="UniProtKB"/>
</dbReference>
<dbReference type="GO" id="GO:0045202">
    <property type="term" value="C:synapse"/>
    <property type="evidence" value="ECO:0007669"/>
    <property type="project" value="GOC"/>
</dbReference>
<dbReference type="GO" id="GO:0004993">
    <property type="term" value="F:G protein-coupled serotonin receptor activity"/>
    <property type="evidence" value="ECO:0000314"/>
    <property type="project" value="UniProtKB"/>
</dbReference>
<dbReference type="GO" id="GO:0007192">
    <property type="term" value="P:adenylate cyclase-activating serotonin receptor signaling pathway"/>
    <property type="evidence" value="ECO:0000250"/>
    <property type="project" value="UniProtKB"/>
</dbReference>
<dbReference type="GO" id="GO:0007268">
    <property type="term" value="P:chemical synaptic transmission"/>
    <property type="evidence" value="ECO:0007669"/>
    <property type="project" value="InterPro"/>
</dbReference>
<dbReference type="GO" id="GO:0007623">
    <property type="term" value="P:circadian rhythm"/>
    <property type="evidence" value="ECO:0007669"/>
    <property type="project" value="InterPro"/>
</dbReference>
<dbReference type="GO" id="GO:0006939">
    <property type="term" value="P:smooth muscle contraction"/>
    <property type="evidence" value="ECO:0007669"/>
    <property type="project" value="InterPro"/>
</dbReference>
<dbReference type="GO" id="GO:0042310">
    <property type="term" value="P:vasoconstriction"/>
    <property type="evidence" value="ECO:0007669"/>
    <property type="project" value="InterPro"/>
</dbReference>
<dbReference type="CDD" id="cd15329">
    <property type="entry name" value="7tmA_5-HT7"/>
    <property type="match status" value="1"/>
</dbReference>
<dbReference type="FunFam" id="1.20.1070.10:FF:000071">
    <property type="entry name" value="5-hydroxytryptamine (serotonin) receptor 7a"/>
    <property type="match status" value="1"/>
</dbReference>
<dbReference type="Gene3D" id="1.20.1070.10">
    <property type="entry name" value="Rhodopsin 7-helix transmembrane proteins"/>
    <property type="match status" value="1"/>
</dbReference>
<dbReference type="InterPro" id="IPR001069">
    <property type="entry name" value="5HT_7_rcpt"/>
</dbReference>
<dbReference type="InterPro" id="IPR000276">
    <property type="entry name" value="GPCR_Rhodpsn"/>
</dbReference>
<dbReference type="InterPro" id="IPR017452">
    <property type="entry name" value="GPCR_Rhodpsn_7TM"/>
</dbReference>
<dbReference type="PANTHER" id="PTHR24248">
    <property type="entry name" value="ADRENERGIC RECEPTOR-RELATED G-PROTEIN COUPLED RECEPTOR"/>
    <property type="match status" value="1"/>
</dbReference>
<dbReference type="PANTHER" id="PTHR24248:SF199">
    <property type="entry name" value="IP13425P-RELATED"/>
    <property type="match status" value="1"/>
</dbReference>
<dbReference type="Pfam" id="PF00001">
    <property type="entry name" value="7tm_1"/>
    <property type="match status" value="1"/>
</dbReference>
<dbReference type="PRINTS" id="PR00652">
    <property type="entry name" value="5HT7RECEPTR"/>
</dbReference>
<dbReference type="PRINTS" id="PR00237">
    <property type="entry name" value="GPCRRHODOPSN"/>
</dbReference>
<dbReference type="SUPFAM" id="SSF81321">
    <property type="entry name" value="Family A G protein-coupled receptor-like"/>
    <property type="match status" value="1"/>
</dbReference>
<dbReference type="PROSITE" id="PS00237">
    <property type="entry name" value="G_PROTEIN_RECEP_F1_1"/>
    <property type="match status" value="1"/>
</dbReference>
<dbReference type="PROSITE" id="PS50262">
    <property type="entry name" value="G_PROTEIN_RECEP_F1_2"/>
    <property type="match status" value="1"/>
</dbReference>
<proteinExistence type="evidence at transcript level"/>
<organism>
    <name type="scientific">Mus musculus</name>
    <name type="common">Mouse</name>
    <dbReference type="NCBI Taxonomy" id="10090"/>
    <lineage>
        <taxon>Eukaryota</taxon>
        <taxon>Metazoa</taxon>
        <taxon>Chordata</taxon>
        <taxon>Craniata</taxon>
        <taxon>Vertebrata</taxon>
        <taxon>Euteleostomi</taxon>
        <taxon>Mammalia</taxon>
        <taxon>Eutheria</taxon>
        <taxon>Euarchontoglires</taxon>
        <taxon>Glires</taxon>
        <taxon>Rodentia</taxon>
        <taxon>Myomorpha</taxon>
        <taxon>Muroidea</taxon>
        <taxon>Muridae</taxon>
        <taxon>Murinae</taxon>
        <taxon>Mus</taxon>
        <taxon>Mus</taxon>
    </lineage>
</organism>